<sequence length="290" mass="31179">MTKNQALRAALDSGRLFTAMAAHNPLVAKLAEQAGFGGIWGSGFELSASYAVPDANILSMSTHLEMMRAIASTVSIPLIADIDTGFGNAVNVHYVVPQYEAAGASAIVMEDKTFPKDTSLRTDGRQELVRIEEFQGKIAAATAARADRDFVVIARVEALIAGLGQQEAVRRGQAYEEAGADAILIHSRQKTPDEILAFVKSWPGKVPLVLVPTAYPQLTEADIAALSKVGIVIYGNHAIRAAVGAVREVFARIRRDGGIREVDAALPSVKEIIELQGDERMRAVEARYLK</sequence>
<keyword id="KW-0002">3D-structure</keyword>
<keyword id="KW-0170">Cobalt</keyword>
<keyword id="KW-0903">Direct protein sequencing</keyword>
<keyword id="KW-0378">Hydrolase</keyword>
<keyword id="KW-0460">Magnesium</keyword>
<keyword id="KW-0479">Metal-binding</keyword>
<dbReference type="EC" id="3.11.1.3"/>
<dbReference type="EMBL" id="AY179862">
    <property type="protein sequence ID" value="AAO24736.1"/>
    <property type="molecule type" value="Genomic_DNA"/>
</dbReference>
<dbReference type="PDB" id="2DUA">
    <property type="method" value="X-ray"/>
    <property type="resolution" value="2.00 A"/>
    <property type="chains" value="A=1-290"/>
</dbReference>
<dbReference type="PDB" id="2HJP">
    <property type="method" value="X-ray"/>
    <property type="resolution" value="1.90 A"/>
    <property type="chains" value="A=1-290"/>
</dbReference>
<dbReference type="PDB" id="2HRW">
    <property type="method" value="X-ray"/>
    <property type="resolution" value="2.20 A"/>
    <property type="chains" value="A=1-290"/>
</dbReference>
<dbReference type="PDBsum" id="2DUA"/>
<dbReference type="PDBsum" id="2HJP"/>
<dbReference type="PDBsum" id="2HRW"/>
<dbReference type="SMR" id="Q84G06"/>
<dbReference type="KEGG" id="ag:AAO24736"/>
<dbReference type="BioCyc" id="MetaCyc:MONOMER-16715"/>
<dbReference type="BRENDA" id="3.11.1.3">
    <property type="organism ID" value="8611"/>
</dbReference>
<dbReference type="EvolutionaryTrace" id="Q84G06"/>
<dbReference type="GO" id="GO:0046872">
    <property type="term" value="F:metal ion binding"/>
    <property type="evidence" value="ECO:0007669"/>
    <property type="project" value="UniProtKB-KW"/>
</dbReference>
<dbReference type="GO" id="GO:0033978">
    <property type="term" value="F:phosphonopyruvate hydrolase activity"/>
    <property type="evidence" value="ECO:0000314"/>
    <property type="project" value="UniProtKB"/>
</dbReference>
<dbReference type="CDD" id="cd00377">
    <property type="entry name" value="ICL_PEPM"/>
    <property type="match status" value="1"/>
</dbReference>
<dbReference type="Gene3D" id="3.20.20.60">
    <property type="entry name" value="Phosphoenolpyruvate-binding domains"/>
    <property type="match status" value="1"/>
</dbReference>
<dbReference type="InterPro" id="IPR039556">
    <property type="entry name" value="ICL/PEPM"/>
</dbReference>
<dbReference type="InterPro" id="IPR012649">
    <property type="entry name" value="PPH"/>
</dbReference>
<dbReference type="InterPro" id="IPR015813">
    <property type="entry name" value="Pyrv/PenolPyrv_kinase-like_dom"/>
</dbReference>
<dbReference type="InterPro" id="IPR040442">
    <property type="entry name" value="Pyrv_kinase-like_dom_sf"/>
</dbReference>
<dbReference type="NCBIfam" id="TIGR02321">
    <property type="entry name" value="Pphn_pyruv_hyd"/>
    <property type="match status" value="1"/>
</dbReference>
<dbReference type="PANTHER" id="PTHR42905">
    <property type="entry name" value="PHOSPHOENOLPYRUVATE CARBOXYLASE"/>
    <property type="match status" value="1"/>
</dbReference>
<dbReference type="PANTHER" id="PTHR42905:SF7">
    <property type="entry name" value="PHOSPHOENOLPYRUVATE PHOSPHOMUTASE"/>
    <property type="match status" value="1"/>
</dbReference>
<dbReference type="Pfam" id="PF13714">
    <property type="entry name" value="PEP_mutase"/>
    <property type="match status" value="1"/>
</dbReference>
<dbReference type="SUPFAM" id="SSF51621">
    <property type="entry name" value="Phosphoenolpyruvate/pyruvate domain"/>
    <property type="match status" value="1"/>
</dbReference>
<reference evidence="7 8" key="1">
    <citation type="journal article" date="2003" name="J. Biol. Chem.">
        <title>The purification and characterization of phosphonopyruvate hydrolase, a novel carbon-phosphorus bond cleavage enzyme from Variovorax sp Pal2.</title>
        <authorList>
            <person name="Kulakova A.N."/>
            <person name="Wisdom G.B."/>
            <person name="Kulakov L.A."/>
            <person name="Quinn J.P."/>
        </authorList>
    </citation>
    <scope>NUCLEOTIDE SEQUENCE [GENOMIC DNA]</scope>
    <scope>PROTEIN SEQUENCE OF 1-28; 67-84 AND 109-136</scope>
    <scope>FUNCTION</scope>
    <scope>CATALYTIC ACTIVITY</scope>
    <scope>COFACTOR</scope>
    <scope>ACTIVITY REGULATION</scope>
    <scope>BIOPHYSICOCHEMICAL PROPERTIES</scope>
    <scope>SUBUNIT</scope>
    <scope>MASS SPECTROMETRY</scope>
</reference>
<reference evidence="7 8" key="2">
    <citation type="journal article" date="2009" name="FEMS Microbiol. Lett.">
        <title>Expression of the phosphonoalanine-degradative gene cluster from Variovorax sp. Pal2 is induced by growth on phosphonoalanine and phosphonopyruvate.</title>
        <authorList>
            <person name="Kulakova A.N."/>
            <person name="Kulakov L.A."/>
            <person name="Villarreal-Chiu J.F."/>
            <person name="Gilbert J.A."/>
            <person name="McGrath J.W."/>
            <person name="Quinn J.P."/>
        </authorList>
    </citation>
    <scope>NUCLEOTIDE SEQUENCE [GENOMIC DNA]</scope>
    <scope>INDUCTION</scope>
</reference>
<reference evidence="7" key="3">
    <citation type="journal article" date="2006" name="Biochemistry">
        <title>Structure and kinetics of phosphonopyruvate hydrolase from Variovorax sp. Pal2: new insight into the divergence of catalysis within the PEP mutase/isocitrate lyase superfamily.</title>
        <authorList>
            <person name="Chen C.C."/>
            <person name="Han Y."/>
            <person name="Niu W."/>
            <person name="Kulakova A.N."/>
            <person name="Howard A."/>
            <person name="Quinn J.P."/>
            <person name="Dunaway-Mariano D."/>
            <person name="Herzberg O."/>
        </authorList>
    </citation>
    <scope>X-RAY CRYSTALLOGRAPHY (1.9 ANGSTROMS) OF APOENZYME AND IN COMPLEXES WITH MAGNESIUM IONS; PHOSPHONOPYRUVATE AND OXALATE</scope>
    <scope>BIOPHYSICOCHEMICAL PROPERTIES</scope>
    <scope>MUTAGENESIS OF ARG-188</scope>
    <scope>SUBUNIT</scope>
</reference>
<accession>Q84G06</accession>
<feature type="chain" id="PRO_0000401168" description="Phosphonopyruvate hydrolase">
    <location>
        <begin position="1"/>
        <end position="290"/>
    </location>
</feature>
<feature type="active site" description="Nucleophile" evidence="1 6">
    <location>
        <position position="54"/>
    </location>
</feature>
<feature type="binding site">
    <location>
        <begin position="40"/>
        <end position="44"/>
    </location>
    <ligand>
        <name>substrate</name>
    </ligand>
</feature>
<feature type="binding site" evidence="3">
    <location>
        <position position="81"/>
    </location>
    <ligand>
        <name>Mg(2+)</name>
        <dbReference type="ChEBI" id="CHEBI:18420"/>
    </ligand>
</feature>
<feature type="binding site">
    <location>
        <position position="155"/>
    </location>
    <ligand>
        <name>substrate</name>
    </ligand>
</feature>
<feature type="binding site">
    <location>
        <position position="186"/>
    </location>
    <ligand>
        <name>substrate</name>
    </ligand>
</feature>
<feature type="binding site">
    <location>
        <position position="188"/>
    </location>
    <ligand>
        <name>substrate</name>
    </ligand>
</feature>
<feature type="mutagenesis site" description="Reduced affinity for substrate." evidence="3">
    <original>R</original>
    <variation>A</variation>
    <location>
        <position position="188"/>
    </location>
</feature>
<feature type="sequence conflict" description="In Ref. 1; AA sequence." evidence="7" ref="1">
    <original>E</original>
    <variation>I</variation>
    <location>
        <position position="132"/>
    </location>
</feature>
<feature type="helix" evidence="9">
    <location>
        <begin position="3"/>
        <end position="13"/>
    </location>
</feature>
<feature type="strand" evidence="9">
    <location>
        <begin position="17"/>
        <end position="21"/>
    </location>
</feature>
<feature type="helix" evidence="9">
    <location>
        <begin position="25"/>
        <end position="34"/>
    </location>
</feature>
<feature type="strand" evidence="9">
    <location>
        <begin position="37"/>
        <end position="41"/>
    </location>
</feature>
<feature type="helix" evidence="9">
    <location>
        <begin position="43"/>
        <end position="49"/>
    </location>
</feature>
<feature type="turn" evidence="9">
    <location>
        <begin position="54"/>
        <end position="56"/>
    </location>
</feature>
<feature type="helix" evidence="9">
    <location>
        <begin position="60"/>
        <end position="71"/>
    </location>
</feature>
<feature type="strand" evidence="9">
    <location>
        <begin position="78"/>
        <end position="81"/>
    </location>
</feature>
<feature type="turn" evidence="9">
    <location>
        <begin position="83"/>
        <end position="86"/>
    </location>
</feature>
<feature type="helix" evidence="9">
    <location>
        <begin position="89"/>
        <end position="102"/>
    </location>
</feature>
<feature type="strand" evidence="9">
    <location>
        <begin position="105"/>
        <end position="110"/>
    </location>
</feature>
<feature type="helix" evidence="9">
    <location>
        <begin position="131"/>
        <end position="144"/>
    </location>
</feature>
<feature type="strand" evidence="9">
    <location>
        <begin position="150"/>
        <end position="156"/>
    </location>
</feature>
<feature type="turn" evidence="9">
    <location>
        <begin position="158"/>
        <end position="162"/>
    </location>
</feature>
<feature type="helix" evidence="9">
    <location>
        <begin position="165"/>
        <end position="177"/>
    </location>
</feature>
<feature type="strand" evidence="9">
    <location>
        <begin position="181"/>
        <end position="185"/>
    </location>
</feature>
<feature type="strand" evidence="9">
    <location>
        <begin position="190"/>
        <end position="192"/>
    </location>
</feature>
<feature type="helix" evidence="9">
    <location>
        <begin position="193"/>
        <end position="201"/>
    </location>
</feature>
<feature type="strand" evidence="9">
    <location>
        <begin position="208"/>
        <end position="210"/>
    </location>
</feature>
<feature type="helix" evidence="9">
    <location>
        <begin position="220"/>
        <end position="224"/>
    </location>
</feature>
<feature type="strand" evidence="9">
    <location>
        <begin position="229"/>
        <end position="234"/>
    </location>
</feature>
<feature type="helix" evidence="9">
    <location>
        <begin position="237"/>
        <end position="256"/>
    </location>
</feature>
<feature type="turn" evidence="9">
    <location>
        <begin position="260"/>
        <end position="265"/>
    </location>
</feature>
<feature type="helix" evidence="9">
    <location>
        <begin position="269"/>
        <end position="275"/>
    </location>
</feature>
<feature type="helix" evidence="9">
    <location>
        <begin position="278"/>
        <end position="288"/>
    </location>
</feature>
<organism>
    <name type="scientific">Variovorax sp. (strain Pal2)</name>
    <dbReference type="NCBI Taxonomy" id="218557"/>
    <lineage>
        <taxon>Bacteria</taxon>
        <taxon>Pseudomonadati</taxon>
        <taxon>Pseudomonadota</taxon>
        <taxon>Betaproteobacteria</taxon>
        <taxon>Burkholderiales</taxon>
        <taxon>Comamonadaceae</taxon>
        <taxon>Variovorax</taxon>
    </lineage>
</organism>
<comment type="function">
    <text evidence="2">Hydrolyzes phosphonopyruvate. Not active towards phosphoenolpyruvate, glycerophosphate, phospho-L-serine or phosphoglycolic acid.</text>
</comment>
<comment type="catalytic activity">
    <reaction evidence="2">
        <text>3-phosphonopyruvate + H2O = pyruvate + phosphate + H(+)</text>
        <dbReference type="Rhea" id="RHEA:16673"/>
        <dbReference type="ChEBI" id="CHEBI:15361"/>
        <dbReference type="ChEBI" id="CHEBI:15377"/>
        <dbReference type="ChEBI" id="CHEBI:15378"/>
        <dbReference type="ChEBI" id="CHEBI:43474"/>
        <dbReference type="ChEBI" id="CHEBI:71402"/>
        <dbReference type="EC" id="3.11.1.3"/>
    </reaction>
</comment>
<comment type="cofactor">
    <cofactor evidence="2">
        <name>Co(2+)</name>
        <dbReference type="ChEBI" id="CHEBI:48828"/>
    </cofactor>
    <cofactor evidence="2">
        <name>Mg(2+)</name>
        <dbReference type="ChEBI" id="CHEBI:18420"/>
    </cofactor>
    <cofactor evidence="2">
        <name>Mn(2+)</name>
        <dbReference type="ChEBI" id="CHEBI:29035"/>
    </cofactor>
    <text evidence="2">Divalent metal cations. Co(2+), Mg(2+) or Mn(2+) can be used.</text>
</comment>
<comment type="activity regulation">
    <text evidence="2">Partially inhibited by EDTA. Activity is restored by Co(2+), and to a lesser extent by Ni(2+) and Mg(2+). Unaffected by Cs(2+) and Ca(2+). Activity is reduced by Mn(2+) and Cu(2+).</text>
</comment>
<comment type="biophysicochemical properties">
    <kinetics>
        <KM evidence="2 3">0.53 mM for phosphonopyruvate (at 37 degrees Celsius, pH 7.0, with 5 umol CoCl(2))</KM>
        <KM evidence="2 3">19.5 uM for phosphonopyruvate (at 25 degrees Celsius, pH 7.5, with 5 mM MgCl(2))</KM>
        <Vmax evidence="2 3">202.0 umol/min/mg enzyme (at 37 degrees Celsius, pH 7.0, with 5 umol CoCl(2))</Vmax>
    </kinetics>
    <phDependence>
        <text evidence="2 3">Optimum pH is 7.0. Active from pH 6.0 to 9.0.</text>
    </phDependence>
</comment>
<comment type="subunit">
    <text evidence="2 3">Homodimer (PubMed:12697754). Homotetramer (PubMed:16981709).</text>
</comment>
<comment type="induction">
    <text evidence="4">By phosphonoalanine or phosphonopyruvate.</text>
</comment>
<comment type="mass spectrometry" mass="31187.0" method="MALDI" evidence="2"/>
<comment type="similarity">
    <text evidence="1">Belongs to the isocitrate lyase/PEP mutase superfamily. PEP mutase family.</text>
</comment>
<protein>
    <recommendedName>
        <fullName evidence="5">Phosphonopyruvate hydrolase</fullName>
        <shortName evidence="5">PPH</shortName>
        <ecNumber>3.11.1.3</ecNumber>
    </recommendedName>
</protein>
<name>PPHA_VARSP</name>
<evidence type="ECO:0000255" key="1"/>
<evidence type="ECO:0000269" key="2">
    <source>
    </source>
</evidence>
<evidence type="ECO:0000269" key="3">
    <source>
    </source>
</evidence>
<evidence type="ECO:0000269" key="4">
    <source>
    </source>
</evidence>
<evidence type="ECO:0000303" key="5">
    <source>
    </source>
</evidence>
<evidence type="ECO:0000303" key="6">
    <source>
    </source>
</evidence>
<evidence type="ECO:0000305" key="7"/>
<evidence type="ECO:0000312" key="8">
    <source>
        <dbReference type="EMBL" id="AAO24736.1"/>
    </source>
</evidence>
<evidence type="ECO:0007829" key="9">
    <source>
        <dbReference type="PDB" id="2HJP"/>
    </source>
</evidence>
<proteinExistence type="evidence at protein level"/>
<gene>
    <name evidence="5" type="primary">pphA</name>
    <name evidence="8" type="synonym">palA</name>
</gene>